<feature type="chain" id="PRO_0000223387" description="Polypeptide N-acetylgalactosaminyltransferase 1">
    <location>
        <begin position="1"/>
        <end position="559"/>
    </location>
</feature>
<feature type="chain" id="PRO_0000012257" description="Polypeptide N-acetylgalactosaminyltransferase 1 soluble form">
    <location>
        <begin position="41"/>
        <end position="559"/>
    </location>
</feature>
<feature type="topological domain" description="Cytoplasmic" evidence="3">
    <location>
        <begin position="1"/>
        <end position="8"/>
    </location>
</feature>
<feature type="transmembrane region" description="Helical; Signal-anchor for type II membrane protein" evidence="3">
    <location>
        <begin position="9"/>
        <end position="28"/>
    </location>
</feature>
<feature type="topological domain" description="Lumenal" evidence="3">
    <location>
        <begin position="29"/>
        <end position="559"/>
    </location>
</feature>
<feature type="domain" description="Ricin B-type lectin" evidence="4">
    <location>
        <begin position="429"/>
        <end position="551"/>
    </location>
</feature>
<feature type="region of interest" description="Disordered" evidence="5">
    <location>
        <begin position="45"/>
        <end position="65"/>
    </location>
</feature>
<feature type="region of interest" description="Catalytic subdomain A">
    <location>
        <begin position="115"/>
        <end position="225"/>
    </location>
</feature>
<feature type="region of interest" description="Catalytic subdomain B">
    <location>
        <begin position="285"/>
        <end position="347"/>
    </location>
</feature>
<feature type="binding site" evidence="1">
    <location>
        <position position="156"/>
    </location>
    <ligand>
        <name>substrate</name>
    </ligand>
</feature>
<feature type="binding site" evidence="1">
    <location>
        <position position="186"/>
    </location>
    <ligand>
        <name>substrate</name>
    </ligand>
</feature>
<feature type="binding site" evidence="1">
    <location>
        <position position="209"/>
    </location>
    <ligand>
        <name>Mn(2+)</name>
        <dbReference type="ChEBI" id="CHEBI:29035"/>
    </ligand>
</feature>
<feature type="binding site" evidence="1">
    <location>
        <position position="211"/>
    </location>
    <ligand>
        <name>Mn(2+)</name>
        <dbReference type="ChEBI" id="CHEBI:29035"/>
    </ligand>
</feature>
<feature type="binding site" evidence="1">
    <location>
        <position position="316"/>
    </location>
    <ligand>
        <name>substrate</name>
    </ligand>
</feature>
<feature type="binding site" evidence="1">
    <location>
        <position position="344"/>
    </location>
    <ligand>
        <name>Mn(2+)</name>
        <dbReference type="ChEBI" id="CHEBI:29035"/>
    </ligand>
</feature>
<feature type="binding site" evidence="1">
    <location>
        <position position="347"/>
    </location>
    <ligand>
        <name>substrate</name>
    </ligand>
</feature>
<feature type="binding site" evidence="1">
    <location>
        <position position="352"/>
    </location>
    <ligand>
        <name>substrate</name>
    </ligand>
</feature>
<feature type="glycosylation site" description="N-linked (GlcNAc...) asparagine" evidence="3">
    <location>
        <position position="95"/>
    </location>
</feature>
<feature type="glycosylation site" description="N-linked (GlcNAc...) asparagine" evidence="3">
    <location>
        <position position="552"/>
    </location>
</feature>
<feature type="disulfide bond" evidence="4">
    <location>
        <begin position="106"/>
        <end position="339"/>
    </location>
</feature>
<feature type="disulfide bond" evidence="4">
    <location>
        <begin position="330"/>
        <end position="408"/>
    </location>
</feature>
<feature type="disulfide bond" evidence="4">
    <location>
        <begin position="442"/>
        <end position="459"/>
    </location>
</feature>
<feature type="disulfide bond" evidence="4">
    <location>
        <begin position="482"/>
        <end position="497"/>
    </location>
</feature>
<feature type="disulfide bond" evidence="4">
    <location>
        <begin position="523"/>
        <end position="540"/>
    </location>
</feature>
<feature type="splice variant" id="VSP_011200" description="In isoform 2." evidence="9">
    <location>
        <begin position="106"/>
        <end position="559"/>
    </location>
</feature>
<feature type="sequence variant" id="VAR_033946" description="In dbSNP:rs34304568.">
    <original>Y</original>
    <variation>D</variation>
    <location>
        <position position="414"/>
    </location>
</feature>
<gene>
    <name evidence="13" type="primary">GALNT1</name>
</gene>
<comment type="function">
    <text evidence="7 8">Catalyzes the initial reaction in O-linked oligosaccharide biosynthesis, the transfer of an N-acetyl-D-galactosamine residue to a serine or threonine residue on the protein receptor (PubMed:8690719, PubMed:9295285). Has a broad spectrum of substrates such as apomucin-, MUC5AC-, MUC1- and MUC2-derived peptides (PubMed:9295285).</text>
</comment>
<comment type="catalytic activity">
    <reaction evidence="7 8">
        <text>L-seryl-[protein] + UDP-N-acetyl-alpha-D-galactosamine = a 3-O-[N-acetyl-alpha-D-galactosaminyl]-L-seryl-[protein] + UDP + H(+)</text>
        <dbReference type="Rhea" id="RHEA:23956"/>
        <dbReference type="Rhea" id="RHEA-COMP:9863"/>
        <dbReference type="Rhea" id="RHEA-COMP:12788"/>
        <dbReference type="ChEBI" id="CHEBI:15378"/>
        <dbReference type="ChEBI" id="CHEBI:29999"/>
        <dbReference type="ChEBI" id="CHEBI:53604"/>
        <dbReference type="ChEBI" id="CHEBI:58223"/>
        <dbReference type="ChEBI" id="CHEBI:67138"/>
        <dbReference type="EC" id="2.4.1.41"/>
    </reaction>
    <physiologicalReaction direction="left-to-right" evidence="11 12">
        <dbReference type="Rhea" id="RHEA:23957"/>
    </physiologicalReaction>
</comment>
<comment type="catalytic activity">
    <reaction evidence="7 8">
        <text>L-threonyl-[protein] + UDP-N-acetyl-alpha-D-galactosamine = a 3-O-[N-acetyl-alpha-D-galactosaminyl]-L-threonyl-[protein] + UDP + H(+)</text>
        <dbReference type="Rhea" id="RHEA:52424"/>
        <dbReference type="Rhea" id="RHEA-COMP:11060"/>
        <dbReference type="Rhea" id="RHEA-COMP:11689"/>
        <dbReference type="ChEBI" id="CHEBI:15378"/>
        <dbReference type="ChEBI" id="CHEBI:30013"/>
        <dbReference type="ChEBI" id="CHEBI:58223"/>
        <dbReference type="ChEBI" id="CHEBI:67138"/>
        <dbReference type="ChEBI" id="CHEBI:87075"/>
        <dbReference type="EC" id="2.4.1.41"/>
    </reaction>
    <physiologicalReaction direction="left-to-right" evidence="11 12">
        <dbReference type="Rhea" id="RHEA:52425"/>
    </physiologicalReaction>
</comment>
<comment type="cofactor">
    <cofactor evidence="2">
        <name>Mn(2+)</name>
        <dbReference type="ChEBI" id="CHEBI:29035"/>
    </cofactor>
</comment>
<comment type="biophysicochemical properties">
    <kinetics>
        <KM evidence="11">6.5 uM for UDP-N-acetyl-alpha-D-galactosamine</KM>
        <KM evidence="8">0.062 mM for UDP-N-acetyl-alpha-D-galactosamine</KM>
        <KM evidence="8">0.66 mM for AHGVTSAPDTR (a MUC1-derived peptide)</KM>
        <KM evidence="8">1.42 mM for APPAHGVTSAPDTRPAPGC (a MUC1-derived peptide)</KM>
        <KM evidence="8">0.4 mM for TAPPAHGVTSAPDTRPAPGSTAPP (a MUC1-derived peptide)</KM>
        <KM evidence="8">0.12 mM for PTTTPISTTTMVTPTPTPTC(a MUC2-derived peptide)</KM>
        <KM evidence="8">1.34 mM for Ac-SAPTTSTTSAPT (a MUC5AC-derived peptide)</KM>
    </kinetics>
</comment>
<comment type="pathway">
    <text evidence="7 8">Protein modification; protein glycosylation.</text>
</comment>
<comment type="subcellular location">
    <molecule>Polypeptide N-acetylgalactosaminyltransferase 1</molecule>
    <subcellularLocation>
        <location>Golgi apparatus</location>
        <location>Golgi stack membrane</location>
        <topology>Single-pass type II membrane protein</topology>
    </subcellularLocation>
</comment>
<comment type="subcellular location">
    <molecule>Polypeptide N-acetylgalactosaminyltransferase 1 soluble form</molecule>
    <subcellularLocation>
        <location>Secreted</location>
    </subcellularLocation>
</comment>
<comment type="alternative products">
    <event type="alternative splicing"/>
    <isoform>
        <id>Q10472-1</id>
        <name>1</name>
        <sequence type="displayed"/>
    </isoform>
    <isoform>
        <id>Q10472-2</id>
        <name>2</name>
        <sequence type="described" ref="VSP_011200"/>
    </isoform>
</comment>
<comment type="tissue specificity">
    <text evidence="6">Widely expressed. Expressed in all tissues tested.</text>
</comment>
<comment type="domain">
    <text evidence="1">There are two conserved domains in the glycosyltransferase region: the N-terminal domain (domain A, also called GT1 motif), which is probably involved in manganese coordination and substrate binding and the C-terminal domain (domain B, also called Gal/GalNAc-T motif), which is probably involved in catalytic reaction and UDP-Gal binding.</text>
</comment>
<comment type="domain">
    <text evidence="1">The ricin B-type lectin domain directs the glycopeptide specificity. It is required in the glycopeptide specificity of enzyme activity but not for activity with naked peptide substrates, suggesting that it triggers the catalytic domain to act on GalNAc-glycopeptide substrates (By similarity).</text>
</comment>
<comment type="similarity">
    <text evidence="10">Belongs to the glycosyltransferase 2 family. GalNAc-T subfamily.</text>
</comment>
<comment type="online information" name="Functional Glycomics Gateway - GTase">
    <link uri="http://www.functionalglycomics.org/glycomics/molecule/jsp/glycoEnzyme/viewGlycoEnzyme.jsp?gbpId=gt_hum_483"/>
    <text>Polypeptide N-acetylgalactosaminyltransferase 1</text>
</comment>
<keyword id="KW-0025">Alternative splicing</keyword>
<keyword id="KW-1015">Disulfide bond</keyword>
<keyword id="KW-0325">Glycoprotein</keyword>
<keyword id="KW-0328">Glycosyltransferase</keyword>
<keyword id="KW-0333">Golgi apparatus</keyword>
<keyword id="KW-0430">Lectin</keyword>
<keyword id="KW-0464">Manganese</keyword>
<keyword id="KW-0472">Membrane</keyword>
<keyword id="KW-0479">Metal-binding</keyword>
<keyword id="KW-1267">Proteomics identification</keyword>
<keyword id="KW-1185">Reference proteome</keyword>
<keyword id="KW-0964">Secreted</keyword>
<keyword id="KW-0735">Signal-anchor</keyword>
<keyword id="KW-0808">Transferase</keyword>
<keyword id="KW-0812">Transmembrane</keyword>
<keyword id="KW-1133">Transmembrane helix</keyword>
<organism>
    <name type="scientific">Homo sapiens</name>
    <name type="common">Human</name>
    <dbReference type="NCBI Taxonomy" id="9606"/>
    <lineage>
        <taxon>Eukaryota</taxon>
        <taxon>Metazoa</taxon>
        <taxon>Chordata</taxon>
        <taxon>Craniata</taxon>
        <taxon>Vertebrata</taxon>
        <taxon>Euteleostomi</taxon>
        <taxon>Mammalia</taxon>
        <taxon>Eutheria</taxon>
        <taxon>Euarchontoglires</taxon>
        <taxon>Primates</taxon>
        <taxon>Haplorrhini</taxon>
        <taxon>Catarrhini</taxon>
        <taxon>Hominidae</taxon>
        <taxon>Homo</taxon>
    </lineage>
</organism>
<accession>Q10472</accession>
<accession>Q86TJ7</accession>
<accession>Q9UM86</accession>
<name>GALT1_HUMAN</name>
<evidence type="ECO:0000250" key="1"/>
<evidence type="ECO:0000250" key="2">
    <source>
        <dbReference type="UniProtKB" id="O08912"/>
    </source>
</evidence>
<evidence type="ECO:0000255" key="3"/>
<evidence type="ECO:0000255" key="4">
    <source>
        <dbReference type="PROSITE-ProRule" id="PRU00174"/>
    </source>
</evidence>
<evidence type="ECO:0000256" key="5">
    <source>
        <dbReference type="SAM" id="MobiDB-lite"/>
    </source>
</evidence>
<evidence type="ECO:0000269" key="6">
    <source>
    </source>
</evidence>
<evidence type="ECO:0000269" key="7">
    <source>
    </source>
</evidence>
<evidence type="ECO:0000269" key="8">
    <source>
    </source>
</evidence>
<evidence type="ECO:0000303" key="9">
    <source>
    </source>
</evidence>
<evidence type="ECO:0000305" key="10"/>
<evidence type="ECO:0000305" key="11">
    <source>
    </source>
</evidence>
<evidence type="ECO:0000305" key="12">
    <source>
    </source>
</evidence>
<evidence type="ECO:0000312" key="13">
    <source>
        <dbReference type="HGNC" id="HGNC:4123"/>
    </source>
</evidence>
<sequence>MRKFAYCKVVLATSLIWVLLDMFLLLYFSECNKCDEKKERGLPAGDVLEPVQKPHEGPGEMGKPVVIPKEDQEKMKEMFKINQFNLMASEMIALNRSLPDVRLEGCKTKVYPDNLPTTSVVIVFHNEAWSTLLRTVHSVINRSPRHMIEEIVLVDDASERDFLKRPLESYVKKLKVPVHVIRMEQRSGLIRARLKGAAVSKGQVITFLDAHCECTVGWLEPLLARIKHDRRTVVCPIIDVISDDTFEYMAGSDMTYGGFNWKLNFRWYPVPQREMDRRKGDRTLPVRTPTMAGGLFSIDRDYFQEIGTYDAGMDIWGGENLEISFRIWQCGGTLEIVTCSHVGHVFRKATPYTFPGGTGQIINKNNRRLAEVWMDEFKNFFYIISPGVTKVDYGDISSRVGLRHKLQCKPFSWYLENIYPDSQIPRHYFSLGEIRNVETNQCLDNMARKENEKVGIFNCHGMGGNQVFSYTANKEIRTDDLCLDVSKLNGPVTMLKCHHLKGNQLWEYDPVKLTLQHVNSNQCLDKATEEDSQVPSIRDCNGSRSQQWLLRNVTLPEIF</sequence>
<proteinExistence type="evidence at protein level"/>
<reference key="1">
    <citation type="journal article" date="1995" name="J. Biochem.">
        <title>cDNA cloning, expression, and chromosomal localization of a human UDP-GalNAc:polypeptide, N-acetylgalactosaminyltransferase.</title>
        <authorList>
            <person name="Meurer J.A."/>
            <person name="Naylor J.M."/>
            <person name="Baker C.A."/>
            <person name="Thomsen D.R."/>
            <person name="Homa F.L."/>
            <person name="Elhammer A.P."/>
        </authorList>
    </citation>
    <scope>NUCLEOTIDE SEQUENCE (ISOFORM 1)</scope>
    <scope>FUNCTION</scope>
    <scope>CATALYTIC ACTIVITY</scope>
    <scope>PATHWAY</scope>
    <scope>BIOPHYSICOCHEMICAL PROPERTIES</scope>
    <source>
        <tissue>Salivary gland</tissue>
    </source>
</reference>
<reference key="2">
    <citation type="journal article" date="1995" name="J. Biol. Chem.">
        <title>Purification and cDNA cloning of a human UDP-N-acetyl-alpha-D-galactosamine:polypeptide N-acetylgalactosaminyltransferase.</title>
        <authorList>
            <person name="White T."/>
            <person name="Bennett E.P."/>
            <person name="Takio K."/>
            <person name="Soerensen T."/>
            <person name="Bonding N."/>
            <person name="Clausen H."/>
        </authorList>
    </citation>
    <scope>NUCLEOTIDE SEQUENCE [MRNA] (ISOFORM 1)</scope>
    <scope>TISSUE SPECIFICITY</scope>
</reference>
<reference key="3">
    <citation type="journal article" date="2004" name="Genome Res.">
        <title>The status, quality, and expansion of the NIH full-length cDNA project: the Mammalian Gene Collection (MGC).</title>
        <authorList>
            <consortium name="The MGC Project Team"/>
        </authorList>
    </citation>
    <scope>NUCLEOTIDE SEQUENCE [LARGE SCALE MRNA] (ISOFORM 2)</scope>
    <source>
        <tissue>PNS</tissue>
    </source>
</reference>
<reference key="4">
    <citation type="journal article" date="1996" name="Glycobiology">
        <title>Organization of a human UDP-GalNAc:polypeptide, N-acetylgalactosaminyltransferase gene and a related processed pseudogene.</title>
        <authorList>
            <person name="Meurer J.A."/>
            <person name="Drong R.F."/>
            <person name="Homa F.L."/>
            <person name="Slightom J.L."/>
            <person name="Elhammer A.P."/>
        </authorList>
    </citation>
    <scope>NUCLEOTIDE SEQUENCE [GENOMIC DNA] OF 512-559 (ISOFORM 1)</scope>
</reference>
<reference key="5">
    <citation type="journal article" date="1997" name="J. Biol. Chem.">
        <title>Substrate specificities of three members of the human UDP-N-acetyl-alpha-D-galactosamine:polypeptide N-acetylgalactosaminyltransferase family, GalNAc-T1, -T2, and -T3.</title>
        <authorList>
            <person name="Wandall H.H."/>
            <person name="Hassan H."/>
            <person name="Mirgorodskaya E."/>
            <person name="Kristensen A.K."/>
            <person name="Roepstorff P."/>
            <person name="Bennett E.P."/>
            <person name="Nielsen P.A."/>
            <person name="Hollingsworth M.A."/>
            <person name="Burchell J."/>
            <person name="Taylor-Papadimitriou J."/>
            <person name="Clausen H."/>
        </authorList>
    </citation>
    <scope>FUNCTION</scope>
    <scope>CATALYTIC ACTIVITY</scope>
    <scope>BIOPHYSICOCHEMICAL PROPERTIES</scope>
    <scope>PATHWAY</scope>
</reference>
<reference key="6">
    <citation type="journal article" date="1998" name="J. Cell Sci.">
        <title>Localization of three human polypeptide GalNAc-transferases in HeLa cells suggests initiation of O-linked glycosylation throughout the Golgi apparatus.</title>
        <authorList>
            <person name="Roettger S."/>
            <person name="White J."/>
            <person name="Wandall H.H."/>
            <person name="Olivo J.-C."/>
            <person name="Stark A."/>
            <person name="Bennett E.P."/>
            <person name="Whitehouse C."/>
            <person name="Berger E.G."/>
            <person name="Clausen H."/>
            <person name="Nilsson T."/>
        </authorList>
    </citation>
    <scope>SUBCELLULAR LOCATION</scope>
</reference>
<reference key="7">
    <citation type="journal article" date="2011" name="BMC Syst. Biol.">
        <title>Initial characterization of the human central proteome.</title>
        <authorList>
            <person name="Burkard T.R."/>
            <person name="Planyavsky M."/>
            <person name="Kaupe I."/>
            <person name="Breitwieser F.P."/>
            <person name="Buerckstuemmer T."/>
            <person name="Bennett K.L."/>
            <person name="Superti-Furga G."/>
            <person name="Colinge J."/>
        </authorList>
    </citation>
    <scope>IDENTIFICATION BY MASS SPECTROMETRY [LARGE SCALE ANALYSIS]</scope>
</reference>
<dbReference type="EC" id="2.4.1.41" evidence="7 8"/>
<dbReference type="EMBL" id="U41514">
    <property type="protein sequence ID" value="AAC50327.1"/>
    <property type="molecule type" value="mRNA"/>
</dbReference>
<dbReference type="EMBL" id="X85018">
    <property type="protein sequence ID" value="CAA59380.1"/>
    <property type="molecule type" value="mRNA"/>
</dbReference>
<dbReference type="EMBL" id="BC047746">
    <property type="protein sequence ID" value="AAH47746.1"/>
    <property type="molecule type" value="mRNA"/>
</dbReference>
<dbReference type="EMBL" id="S82597">
    <property type="protein sequence ID" value="AAD14406.1"/>
    <property type="molecule type" value="Genomic_DNA"/>
</dbReference>
<dbReference type="CCDS" id="CCDS11915.1">
    <molecule id="Q10472-1"/>
</dbReference>
<dbReference type="PIR" id="JC4223">
    <property type="entry name" value="JC4223"/>
</dbReference>
<dbReference type="RefSeq" id="NP_001371367.1">
    <molecule id="Q10472-1"/>
    <property type="nucleotide sequence ID" value="NM_001384438.1"/>
</dbReference>
<dbReference type="RefSeq" id="NP_001371368.1">
    <molecule id="Q10472-1"/>
    <property type="nucleotide sequence ID" value="NM_001384439.1"/>
</dbReference>
<dbReference type="RefSeq" id="NP_001371369.1">
    <molecule id="Q10472-1"/>
    <property type="nucleotide sequence ID" value="NM_001384440.1"/>
</dbReference>
<dbReference type="RefSeq" id="NP_001371370.1">
    <molecule id="Q10472-1"/>
    <property type="nucleotide sequence ID" value="NM_001384441.1"/>
</dbReference>
<dbReference type="RefSeq" id="NP_001371371.1">
    <molecule id="Q10472-1"/>
    <property type="nucleotide sequence ID" value="NM_001384442.1"/>
</dbReference>
<dbReference type="RefSeq" id="NP_001371372.1">
    <molecule id="Q10472-1"/>
    <property type="nucleotide sequence ID" value="NM_001384443.1"/>
</dbReference>
<dbReference type="RefSeq" id="NP_001371373.1">
    <molecule id="Q10472-1"/>
    <property type="nucleotide sequence ID" value="NM_001384444.1"/>
</dbReference>
<dbReference type="RefSeq" id="NP_001371374.1">
    <molecule id="Q10472-1"/>
    <property type="nucleotide sequence ID" value="NM_001384445.1"/>
</dbReference>
<dbReference type="RefSeq" id="NP_001371375.1">
    <molecule id="Q10472-1"/>
    <property type="nucleotide sequence ID" value="NM_001384446.1"/>
</dbReference>
<dbReference type="RefSeq" id="NP_065207.2">
    <molecule id="Q10472-1"/>
    <property type="nucleotide sequence ID" value="NM_020474.3"/>
</dbReference>
<dbReference type="RefSeq" id="XP_005258296.1">
    <property type="nucleotide sequence ID" value="XM_005258239.3"/>
</dbReference>
<dbReference type="RefSeq" id="XP_016881181.1">
    <property type="nucleotide sequence ID" value="XM_017025692.1"/>
</dbReference>
<dbReference type="RefSeq" id="XP_047293421.1">
    <molecule id="Q10472-1"/>
    <property type="nucleotide sequence ID" value="XM_047437465.1"/>
</dbReference>
<dbReference type="RefSeq" id="XP_047293422.1">
    <molecule id="Q10472-1"/>
    <property type="nucleotide sequence ID" value="XM_047437466.1"/>
</dbReference>
<dbReference type="RefSeq" id="XP_047293423.1">
    <molecule id="Q10472-1"/>
    <property type="nucleotide sequence ID" value="XM_047437467.1"/>
</dbReference>
<dbReference type="SMR" id="Q10472"/>
<dbReference type="BioGRID" id="108861">
    <property type="interactions" value="87"/>
</dbReference>
<dbReference type="FunCoup" id="Q10472">
    <property type="interactions" value="1894"/>
</dbReference>
<dbReference type="IntAct" id="Q10472">
    <property type="interactions" value="43"/>
</dbReference>
<dbReference type="MINT" id="Q10472"/>
<dbReference type="STRING" id="9606.ENSP00000269195"/>
<dbReference type="BindingDB" id="Q10472"/>
<dbReference type="ChEMBL" id="CHEMBL4523282"/>
<dbReference type="CAZy" id="CBM13">
    <property type="family name" value="Carbohydrate-Binding Module Family 13"/>
</dbReference>
<dbReference type="CAZy" id="GT27">
    <property type="family name" value="Glycosyltransferase Family 27"/>
</dbReference>
<dbReference type="GlyCosmos" id="Q10472">
    <property type="glycosylation" value="2 sites, No reported glycans"/>
</dbReference>
<dbReference type="GlyGen" id="Q10472">
    <property type="glycosylation" value="10 sites, 4 N-linked glycans (2 sites), 1 O-linked glycan (1 site)"/>
</dbReference>
<dbReference type="iPTMnet" id="Q10472"/>
<dbReference type="PhosphoSitePlus" id="Q10472"/>
<dbReference type="SwissPalm" id="Q10472"/>
<dbReference type="BioMuta" id="GALNT1"/>
<dbReference type="DMDM" id="1709558"/>
<dbReference type="jPOST" id="Q10472"/>
<dbReference type="MassIVE" id="Q10472"/>
<dbReference type="PaxDb" id="9606-ENSP00000269195"/>
<dbReference type="PeptideAtlas" id="Q10472"/>
<dbReference type="ProteomicsDB" id="58855">
    <molecule id="Q10472-1"/>
</dbReference>
<dbReference type="ProteomicsDB" id="58856">
    <molecule id="Q10472-2"/>
</dbReference>
<dbReference type="Pumba" id="Q10472"/>
<dbReference type="Antibodypedia" id="2480">
    <property type="antibodies" value="64 antibodies from 12 providers"/>
</dbReference>
<dbReference type="DNASU" id="2589"/>
<dbReference type="Ensembl" id="ENST00000269195.6">
    <molecule id="Q10472-1"/>
    <property type="protein sequence ID" value="ENSP00000269195.4"/>
    <property type="gene ID" value="ENSG00000141429.14"/>
</dbReference>
<dbReference type="Ensembl" id="ENST00000591081.1">
    <molecule id="Q10472-2"/>
    <property type="protein sequence ID" value="ENSP00000466411.1"/>
    <property type="gene ID" value="ENSG00000141429.14"/>
</dbReference>
<dbReference type="Ensembl" id="ENST00000591924.5">
    <molecule id="Q10472-2"/>
    <property type="protein sequence ID" value="ENSP00000465699.1"/>
    <property type="gene ID" value="ENSG00000141429.14"/>
</dbReference>
<dbReference type="GeneID" id="2589"/>
<dbReference type="KEGG" id="hsa:2589"/>
<dbReference type="MANE-Select" id="ENST00000269195.6">
    <property type="protein sequence ID" value="ENSP00000269195.4"/>
    <property type="RefSeq nucleotide sequence ID" value="NM_020474.4"/>
    <property type="RefSeq protein sequence ID" value="NP_065207.2"/>
</dbReference>
<dbReference type="UCSC" id="uc002kza.3">
    <molecule id="Q10472-1"/>
    <property type="organism name" value="human"/>
</dbReference>
<dbReference type="AGR" id="HGNC:4123"/>
<dbReference type="CTD" id="2589"/>
<dbReference type="DisGeNET" id="2589"/>
<dbReference type="GeneCards" id="GALNT1"/>
<dbReference type="HGNC" id="HGNC:4123">
    <property type="gene designation" value="GALNT1"/>
</dbReference>
<dbReference type="HPA" id="ENSG00000141429">
    <property type="expression patterns" value="Low tissue specificity"/>
</dbReference>
<dbReference type="MIM" id="602273">
    <property type="type" value="gene"/>
</dbReference>
<dbReference type="neXtProt" id="NX_Q10472"/>
<dbReference type="OpenTargets" id="ENSG00000141429"/>
<dbReference type="PharmGKB" id="PA30054"/>
<dbReference type="VEuPathDB" id="HostDB:ENSG00000141429"/>
<dbReference type="eggNOG" id="KOG3736">
    <property type="taxonomic scope" value="Eukaryota"/>
</dbReference>
<dbReference type="GeneTree" id="ENSGT00940000154732"/>
<dbReference type="HOGENOM" id="CLU_2365037_0_0_1"/>
<dbReference type="InParanoid" id="Q10472"/>
<dbReference type="OMA" id="MGQGFAP"/>
<dbReference type="OrthoDB" id="330637at2759"/>
<dbReference type="PAN-GO" id="Q10472">
    <property type="GO annotations" value="2 GO annotations based on evolutionary models"/>
</dbReference>
<dbReference type="PhylomeDB" id="Q10472"/>
<dbReference type="TreeFam" id="TF313267"/>
<dbReference type="BioCyc" id="MetaCyc:HS06826-MONOMER"/>
<dbReference type="BRENDA" id="2.4.1.41">
    <property type="organism ID" value="2681"/>
</dbReference>
<dbReference type="PathwayCommons" id="Q10472"/>
<dbReference type="Reactome" id="R-HSA-6811436">
    <property type="pathway name" value="COPI-independent Golgi-to-ER retrograde traffic"/>
</dbReference>
<dbReference type="Reactome" id="R-HSA-913709">
    <property type="pathway name" value="O-linked glycosylation of mucins"/>
</dbReference>
<dbReference type="Reactome" id="R-HSA-9683673">
    <property type="pathway name" value="Maturation of protein 3a"/>
</dbReference>
<dbReference type="Reactome" id="R-HSA-9694719">
    <property type="pathway name" value="Maturation of protein 3a"/>
</dbReference>
<dbReference type="SABIO-RK" id="Q10472"/>
<dbReference type="SignaLink" id="Q10472"/>
<dbReference type="UniPathway" id="UPA00378"/>
<dbReference type="BioGRID-ORCS" id="2589">
    <property type="hits" value="12 hits in 1165 CRISPR screens"/>
</dbReference>
<dbReference type="ChiTaRS" id="GALNT1">
    <property type="organism name" value="human"/>
</dbReference>
<dbReference type="GeneWiki" id="GALNT1"/>
<dbReference type="GenomeRNAi" id="2589"/>
<dbReference type="Pharos" id="Q10472">
    <property type="development level" value="Tbio"/>
</dbReference>
<dbReference type="PRO" id="PR:Q10472"/>
<dbReference type="Proteomes" id="UP000005640">
    <property type="component" value="Chromosome 18"/>
</dbReference>
<dbReference type="RNAct" id="Q10472">
    <property type="molecule type" value="protein"/>
</dbReference>
<dbReference type="Bgee" id="ENSG00000141429">
    <property type="expression patterns" value="Expressed in buccal mucosa cell and 218 other cell types or tissues"/>
</dbReference>
<dbReference type="ExpressionAtlas" id="Q10472">
    <property type="expression patterns" value="baseline and differential"/>
</dbReference>
<dbReference type="GO" id="GO:0005789">
    <property type="term" value="C:endoplasmic reticulum membrane"/>
    <property type="evidence" value="ECO:0000304"/>
    <property type="project" value="Reactome"/>
</dbReference>
<dbReference type="GO" id="GO:0033116">
    <property type="term" value="C:endoplasmic reticulum-Golgi intermediate compartment membrane"/>
    <property type="evidence" value="ECO:0000304"/>
    <property type="project" value="Reactome"/>
</dbReference>
<dbReference type="GO" id="GO:0005576">
    <property type="term" value="C:extracellular region"/>
    <property type="evidence" value="ECO:0007669"/>
    <property type="project" value="UniProtKB-SubCell"/>
</dbReference>
<dbReference type="GO" id="GO:0032580">
    <property type="term" value="C:Golgi cisterna membrane"/>
    <property type="evidence" value="ECO:0007669"/>
    <property type="project" value="UniProtKB-SubCell"/>
</dbReference>
<dbReference type="GO" id="GO:0000139">
    <property type="term" value="C:Golgi membrane"/>
    <property type="evidence" value="ECO:0000304"/>
    <property type="project" value="Reactome"/>
</dbReference>
<dbReference type="GO" id="GO:0016020">
    <property type="term" value="C:membrane"/>
    <property type="evidence" value="ECO:0007005"/>
    <property type="project" value="UniProtKB"/>
</dbReference>
<dbReference type="GO" id="GO:0048471">
    <property type="term" value="C:perinuclear region of cytoplasm"/>
    <property type="evidence" value="ECO:0000314"/>
    <property type="project" value="BHF-UCL"/>
</dbReference>
<dbReference type="GO" id="GO:0030246">
    <property type="term" value="F:carbohydrate binding"/>
    <property type="evidence" value="ECO:0007669"/>
    <property type="project" value="UniProtKB-KW"/>
</dbReference>
<dbReference type="GO" id="GO:0030145">
    <property type="term" value="F:manganese ion binding"/>
    <property type="evidence" value="ECO:0000314"/>
    <property type="project" value="BHF-UCL"/>
</dbReference>
<dbReference type="GO" id="GO:0004653">
    <property type="term" value="F:polypeptide N-acetylgalactosaminyltransferase activity"/>
    <property type="evidence" value="ECO:0000314"/>
    <property type="project" value="UniProtKB"/>
</dbReference>
<dbReference type="GO" id="GO:0016266">
    <property type="term" value="P:O-glycan processing"/>
    <property type="evidence" value="ECO:0000304"/>
    <property type="project" value="Reactome"/>
</dbReference>
<dbReference type="GO" id="GO:0006493">
    <property type="term" value="P:protein O-linked glycosylation"/>
    <property type="evidence" value="ECO:0000314"/>
    <property type="project" value="UniProtKB"/>
</dbReference>
<dbReference type="GO" id="GO:0018242">
    <property type="term" value="P:protein O-linked glycosylation via serine"/>
    <property type="evidence" value="ECO:0000314"/>
    <property type="project" value="BHF-UCL"/>
</dbReference>
<dbReference type="GO" id="GO:0018243">
    <property type="term" value="P:protein O-linked glycosylation via threonine"/>
    <property type="evidence" value="ECO:0000314"/>
    <property type="project" value="BHF-UCL"/>
</dbReference>
<dbReference type="GO" id="GO:0019082">
    <property type="term" value="P:viral protein processing"/>
    <property type="evidence" value="ECO:0000304"/>
    <property type="project" value="Reactome"/>
</dbReference>
<dbReference type="CDD" id="cd23466">
    <property type="entry name" value="beta-trefoil_Ricin_GALNT1"/>
    <property type="match status" value="1"/>
</dbReference>
<dbReference type="CDD" id="cd02510">
    <property type="entry name" value="pp-GalNAc-T"/>
    <property type="match status" value="1"/>
</dbReference>
<dbReference type="FunFam" id="2.80.10.50:FF:000014">
    <property type="entry name" value="Polypeptide N-acetylgalactosaminyltransferase"/>
    <property type="match status" value="1"/>
</dbReference>
<dbReference type="FunFam" id="3.90.550.10:FF:000005">
    <property type="entry name" value="Polypeptide N-acetylgalactosaminyltransferase"/>
    <property type="match status" value="1"/>
</dbReference>
<dbReference type="Gene3D" id="2.80.10.50">
    <property type="match status" value="1"/>
</dbReference>
<dbReference type="Gene3D" id="3.90.550.10">
    <property type="entry name" value="Spore Coat Polysaccharide Biosynthesis Protein SpsA, Chain A"/>
    <property type="match status" value="1"/>
</dbReference>
<dbReference type="InterPro" id="IPR045885">
    <property type="entry name" value="GalNAc-T"/>
</dbReference>
<dbReference type="InterPro" id="IPR001173">
    <property type="entry name" value="Glyco_trans_2-like"/>
</dbReference>
<dbReference type="InterPro" id="IPR029044">
    <property type="entry name" value="Nucleotide-diphossugar_trans"/>
</dbReference>
<dbReference type="InterPro" id="IPR035992">
    <property type="entry name" value="Ricin_B-like_lectins"/>
</dbReference>
<dbReference type="InterPro" id="IPR000772">
    <property type="entry name" value="Ricin_B_lectin"/>
</dbReference>
<dbReference type="PANTHER" id="PTHR11675">
    <property type="entry name" value="N-ACETYLGALACTOSAMINYLTRANSFERASE"/>
    <property type="match status" value="1"/>
</dbReference>
<dbReference type="PANTHER" id="PTHR11675:SF123">
    <property type="entry name" value="POLYPEPTIDE N-ACETYLGALACTOSAMINYLTRANSFERASE 1"/>
    <property type="match status" value="1"/>
</dbReference>
<dbReference type="Pfam" id="PF00535">
    <property type="entry name" value="Glycos_transf_2"/>
    <property type="match status" value="1"/>
</dbReference>
<dbReference type="Pfam" id="PF00652">
    <property type="entry name" value="Ricin_B_lectin"/>
    <property type="match status" value="1"/>
</dbReference>
<dbReference type="SMART" id="SM00458">
    <property type="entry name" value="RICIN"/>
    <property type="match status" value="1"/>
</dbReference>
<dbReference type="SUPFAM" id="SSF53448">
    <property type="entry name" value="Nucleotide-diphospho-sugar transferases"/>
    <property type="match status" value="1"/>
</dbReference>
<dbReference type="SUPFAM" id="SSF50370">
    <property type="entry name" value="Ricin B-like lectins"/>
    <property type="match status" value="1"/>
</dbReference>
<dbReference type="PROSITE" id="PS50231">
    <property type="entry name" value="RICIN_B_LECTIN"/>
    <property type="match status" value="1"/>
</dbReference>
<protein>
    <recommendedName>
        <fullName evidence="10">Polypeptide N-acetylgalactosaminyltransferase 1</fullName>
        <ecNumber evidence="7 8">2.4.1.41</ecNumber>
    </recommendedName>
    <alternativeName>
        <fullName>Polypeptide GalNAc transferase 1</fullName>
        <shortName>GalNAc-T1</shortName>
        <shortName>pp-GaNTase 1</shortName>
    </alternativeName>
    <alternativeName>
        <fullName>Protein-UDP acetylgalactosaminyltransferase 1</fullName>
    </alternativeName>
    <alternativeName>
        <fullName>UDP-GalNAc:polypeptide N-acetylgalactosaminyltransferase 1</fullName>
    </alternativeName>
    <component>
        <recommendedName>
            <fullName>Polypeptide N-acetylgalactosaminyltransferase 1 soluble form</fullName>
        </recommendedName>
    </component>
</protein>